<name>RHTC_SALTI</name>
<accession>Q8Z3B3</accession>
<gene>
    <name type="primary">rhtC</name>
    <name type="ordered locus">STY3600</name>
    <name type="ordered locus">t3338</name>
</gene>
<protein>
    <recommendedName>
        <fullName>Threonine efflux protein</fullName>
    </recommendedName>
</protein>
<reference key="1">
    <citation type="journal article" date="2001" name="Nature">
        <title>Complete genome sequence of a multiple drug resistant Salmonella enterica serovar Typhi CT18.</title>
        <authorList>
            <person name="Parkhill J."/>
            <person name="Dougan G."/>
            <person name="James K.D."/>
            <person name="Thomson N.R."/>
            <person name="Pickard D."/>
            <person name="Wain J."/>
            <person name="Churcher C.M."/>
            <person name="Mungall K.L."/>
            <person name="Bentley S.D."/>
            <person name="Holden M.T.G."/>
            <person name="Sebaihia M."/>
            <person name="Baker S."/>
            <person name="Basham D."/>
            <person name="Brooks K."/>
            <person name="Chillingworth T."/>
            <person name="Connerton P."/>
            <person name="Cronin A."/>
            <person name="Davis P."/>
            <person name="Davies R.M."/>
            <person name="Dowd L."/>
            <person name="White N."/>
            <person name="Farrar J."/>
            <person name="Feltwell T."/>
            <person name="Hamlin N."/>
            <person name="Haque A."/>
            <person name="Hien T.T."/>
            <person name="Holroyd S."/>
            <person name="Jagels K."/>
            <person name="Krogh A."/>
            <person name="Larsen T.S."/>
            <person name="Leather S."/>
            <person name="Moule S."/>
            <person name="O'Gaora P."/>
            <person name="Parry C."/>
            <person name="Quail M.A."/>
            <person name="Rutherford K.M."/>
            <person name="Simmonds M."/>
            <person name="Skelton J."/>
            <person name="Stevens K."/>
            <person name="Whitehead S."/>
            <person name="Barrell B.G."/>
        </authorList>
    </citation>
    <scope>NUCLEOTIDE SEQUENCE [LARGE SCALE GENOMIC DNA]</scope>
    <source>
        <strain>CT18</strain>
    </source>
</reference>
<reference key="2">
    <citation type="journal article" date="2003" name="J. Bacteriol.">
        <title>Comparative genomics of Salmonella enterica serovar Typhi strains Ty2 and CT18.</title>
        <authorList>
            <person name="Deng W."/>
            <person name="Liou S.-R."/>
            <person name="Plunkett G. III"/>
            <person name="Mayhew G.F."/>
            <person name="Rose D.J."/>
            <person name="Burland V."/>
            <person name="Kodoyianni V."/>
            <person name="Schwartz D.C."/>
            <person name="Blattner F.R."/>
        </authorList>
    </citation>
    <scope>NUCLEOTIDE SEQUENCE [LARGE SCALE GENOMIC DNA]</scope>
    <source>
        <strain>ATCC 700931 / Ty2</strain>
    </source>
</reference>
<comment type="function">
    <text evidence="1">Conducts the efflux of threonine.</text>
</comment>
<comment type="subcellular location">
    <subcellularLocation>
        <location evidence="1">Cell inner membrane</location>
        <topology evidence="1">Multi-pass membrane protein</topology>
    </subcellularLocation>
</comment>
<comment type="similarity">
    <text evidence="3">Belongs to the Rht family.</text>
</comment>
<keyword id="KW-0997">Cell inner membrane</keyword>
<keyword id="KW-1003">Cell membrane</keyword>
<keyword id="KW-0472">Membrane</keyword>
<keyword id="KW-0812">Transmembrane</keyword>
<keyword id="KW-1133">Transmembrane helix</keyword>
<keyword id="KW-0813">Transport</keyword>
<feature type="chain" id="PRO_0000094738" description="Threonine efflux protein">
    <location>
        <begin position="1"/>
        <end position="206"/>
    </location>
</feature>
<feature type="transmembrane region" description="Helical" evidence="2">
    <location>
        <begin position="1"/>
        <end position="21"/>
    </location>
</feature>
<feature type="topological domain" description="Periplasmic" evidence="2">
    <location>
        <begin position="22"/>
        <end position="43"/>
    </location>
</feature>
<feature type="transmembrane region" description="Helical" evidence="2">
    <location>
        <begin position="44"/>
        <end position="64"/>
    </location>
</feature>
<feature type="topological domain" description="Cytoplasmic" evidence="2">
    <location>
        <begin position="65"/>
        <end position="66"/>
    </location>
</feature>
<feature type="transmembrane region" description="Helical" evidence="2">
    <location>
        <begin position="67"/>
        <end position="87"/>
    </location>
</feature>
<feature type="topological domain" description="Periplasmic" evidence="2">
    <location>
        <begin position="88"/>
        <end position="149"/>
    </location>
</feature>
<feature type="transmembrane region" description="Helical" evidence="2">
    <location>
        <begin position="150"/>
        <end position="173"/>
    </location>
</feature>
<feature type="topological domain" description="Cytoplasmic" evidence="2">
    <location>
        <begin position="174"/>
        <end position="206"/>
    </location>
</feature>
<sequence>MLMLFFTVAMVHIVALMSPGPDFFFVSQTAVSRSRKEAMMGVLGITCGVMVWAGVALLGLHLIIEKMAWLHTIIMVGGGLYLCWMGYQMLRGALKKQDAAASSPHIELAQSGRSFLKGLLTNLSNPKAIIYFGSVFSLFVGDNVGAAARWGIFALITLETLAWFTVVASLFALPKMRRGYQRLAKWIDGFAGALFAGFGIHLIISR</sequence>
<evidence type="ECO:0000250" key="1"/>
<evidence type="ECO:0000255" key="2"/>
<evidence type="ECO:0000305" key="3"/>
<organism>
    <name type="scientific">Salmonella typhi</name>
    <dbReference type="NCBI Taxonomy" id="90370"/>
    <lineage>
        <taxon>Bacteria</taxon>
        <taxon>Pseudomonadati</taxon>
        <taxon>Pseudomonadota</taxon>
        <taxon>Gammaproteobacteria</taxon>
        <taxon>Enterobacterales</taxon>
        <taxon>Enterobacteriaceae</taxon>
        <taxon>Salmonella</taxon>
    </lineage>
</organism>
<proteinExistence type="inferred from homology"/>
<dbReference type="EMBL" id="AL513382">
    <property type="protein sequence ID" value="CAD07933.1"/>
    <property type="molecule type" value="Genomic_DNA"/>
</dbReference>
<dbReference type="EMBL" id="AE014613">
    <property type="protein sequence ID" value="AAO70866.1"/>
    <property type="molecule type" value="Genomic_DNA"/>
</dbReference>
<dbReference type="RefSeq" id="NP_457792.1">
    <property type="nucleotide sequence ID" value="NC_003198.1"/>
</dbReference>
<dbReference type="RefSeq" id="WP_000928814.1">
    <property type="nucleotide sequence ID" value="NZ_WSUR01000033.1"/>
</dbReference>
<dbReference type="STRING" id="220341.gene:17587452"/>
<dbReference type="KEGG" id="stt:t3338"/>
<dbReference type="KEGG" id="sty:STY3600"/>
<dbReference type="PATRIC" id="fig|220341.7.peg.3669"/>
<dbReference type="eggNOG" id="COG1280">
    <property type="taxonomic scope" value="Bacteria"/>
</dbReference>
<dbReference type="HOGENOM" id="CLU_079569_0_1_6"/>
<dbReference type="OMA" id="MAWLHNI"/>
<dbReference type="OrthoDB" id="581870at2"/>
<dbReference type="Proteomes" id="UP000000541">
    <property type="component" value="Chromosome"/>
</dbReference>
<dbReference type="Proteomes" id="UP000002670">
    <property type="component" value="Chromosome"/>
</dbReference>
<dbReference type="GO" id="GO:0005886">
    <property type="term" value="C:plasma membrane"/>
    <property type="evidence" value="ECO:0007669"/>
    <property type="project" value="UniProtKB-SubCell"/>
</dbReference>
<dbReference type="GO" id="GO:0015171">
    <property type="term" value="F:amino acid transmembrane transporter activity"/>
    <property type="evidence" value="ECO:0007669"/>
    <property type="project" value="TreeGrafter"/>
</dbReference>
<dbReference type="InterPro" id="IPR004778">
    <property type="entry name" value="Homoserine/Threonine_efflux"/>
</dbReference>
<dbReference type="InterPro" id="IPR001123">
    <property type="entry name" value="LeuE-type"/>
</dbReference>
<dbReference type="NCBIfam" id="TIGR00949">
    <property type="entry name" value="2A76"/>
    <property type="match status" value="1"/>
</dbReference>
<dbReference type="NCBIfam" id="NF007591">
    <property type="entry name" value="PRK10229.1"/>
    <property type="match status" value="1"/>
</dbReference>
<dbReference type="PANTHER" id="PTHR30086">
    <property type="entry name" value="ARGININE EXPORTER PROTEIN ARGO"/>
    <property type="match status" value="1"/>
</dbReference>
<dbReference type="PANTHER" id="PTHR30086:SF19">
    <property type="entry name" value="THREONINE EFFLUX PROTEIN"/>
    <property type="match status" value="1"/>
</dbReference>
<dbReference type="Pfam" id="PF01810">
    <property type="entry name" value="LysE"/>
    <property type="match status" value="1"/>
</dbReference>
<dbReference type="PIRSF" id="PIRSF006324">
    <property type="entry name" value="LeuE"/>
    <property type="match status" value="1"/>
</dbReference>